<evidence type="ECO:0000250" key="1"/>
<evidence type="ECO:0000305" key="2"/>
<proteinExistence type="evidence at transcript level"/>
<dbReference type="EC" id="4.2.1.11"/>
<dbReference type="EMBL" id="AB004291">
    <property type="protein sequence ID" value="BAA24680.1"/>
    <property type="molecule type" value="mRNA"/>
</dbReference>
<dbReference type="RefSeq" id="NP_990207.1">
    <property type="nucleotide sequence ID" value="NM_204876.1"/>
</dbReference>
<dbReference type="SMR" id="O57391"/>
<dbReference type="BioGRID" id="675967">
    <property type="interactions" value="1"/>
</dbReference>
<dbReference type="FunCoup" id="O57391">
    <property type="interactions" value="1498"/>
</dbReference>
<dbReference type="IntAct" id="O57391">
    <property type="interactions" value="1"/>
</dbReference>
<dbReference type="STRING" id="9031.ENSGALP00000061472"/>
<dbReference type="PaxDb" id="9031-ENSGALP00000023398"/>
<dbReference type="GeneID" id="395689"/>
<dbReference type="KEGG" id="gga:395689"/>
<dbReference type="CTD" id="2026"/>
<dbReference type="VEuPathDB" id="HostDB:geneid_395689"/>
<dbReference type="eggNOG" id="KOG2670">
    <property type="taxonomic scope" value="Eukaryota"/>
</dbReference>
<dbReference type="InParanoid" id="O57391"/>
<dbReference type="OrthoDB" id="1739814at2759"/>
<dbReference type="PhylomeDB" id="O57391"/>
<dbReference type="Reactome" id="R-GGA-352875">
    <property type="pathway name" value="Gluconeogenesis"/>
</dbReference>
<dbReference type="Reactome" id="R-GGA-352882">
    <property type="pathway name" value="Glycolysis"/>
</dbReference>
<dbReference type="UniPathway" id="UPA00109">
    <property type="reaction ID" value="UER00187"/>
</dbReference>
<dbReference type="PRO" id="PR:O57391"/>
<dbReference type="Proteomes" id="UP000000539">
    <property type="component" value="Unassembled WGS sequence"/>
</dbReference>
<dbReference type="GO" id="GO:0005829">
    <property type="term" value="C:cytosol"/>
    <property type="evidence" value="ECO:0000304"/>
    <property type="project" value="Reactome"/>
</dbReference>
<dbReference type="GO" id="GO:0000015">
    <property type="term" value="C:phosphopyruvate hydratase complex"/>
    <property type="evidence" value="ECO:0000318"/>
    <property type="project" value="GO_Central"/>
</dbReference>
<dbReference type="GO" id="GO:0000287">
    <property type="term" value="F:magnesium ion binding"/>
    <property type="evidence" value="ECO:0007669"/>
    <property type="project" value="InterPro"/>
</dbReference>
<dbReference type="GO" id="GO:0004634">
    <property type="term" value="F:phosphopyruvate hydratase activity"/>
    <property type="evidence" value="ECO:0000318"/>
    <property type="project" value="GO_Central"/>
</dbReference>
<dbReference type="GO" id="GO:0006096">
    <property type="term" value="P:glycolytic process"/>
    <property type="evidence" value="ECO:0000318"/>
    <property type="project" value="GO_Central"/>
</dbReference>
<dbReference type="CDD" id="cd03313">
    <property type="entry name" value="enolase"/>
    <property type="match status" value="1"/>
</dbReference>
<dbReference type="FunFam" id="3.30.390.10:FF:000001">
    <property type="entry name" value="Enolase"/>
    <property type="match status" value="1"/>
</dbReference>
<dbReference type="FunFam" id="3.20.20.120:FF:000002">
    <property type="entry name" value="Enolase 1"/>
    <property type="match status" value="1"/>
</dbReference>
<dbReference type="Gene3D" id="3.20.20.120">
    <property type="entry name" value="Enolase-like C-terminal domain"/>
    <property type="match status" value="1"/>
</dbReference>
<dbReference type="Gene3D" id="3.30.390.10">
    <property type="entry name" value="Enolase-like, N-terminal domain"/>
    <property type="match status" value="1"/>
</dbReference>
<dbReference type="HAMAP" id="MF_00318">
    <property type="entry name" value="Enolase"/>
    <property type="match status" value="1"/>
</dbReference>
<dbReference type="InterPro" id="IPR000941">
    <property type="entry name" value="Enolase"/>
</dbReference>
<dbReference type="InterPro" id="IPR036849">
    <property type="entry name" value="Enolase-like_C_sf"/>
</dbReference>
<dbReference type="InterPro" id="IPR029017">
    <property type="entry name" value="Enolase-like_N"/>
</dbReference>
<dbReference type="InterPro" id="IPR020810">
    <property type="entry name" value="Enolase_C"/>
</dbReference>
<dbReference type="InterPro" id="IPR020809">
    <property type="entry name" value="Enolase_CS"/>
</dbReference>
<dbReference type="InterPro" id="IPR020811">
    <property type="entry name" value="Enolase_N"/>
</dbReference>
<dbReference type="NCBIfam" id="TIGR01060">
    <property type="entry name" value="eno"/>
    <property type="match status" value="1"/>
</dbReference>
<dbReference type="PANTHER" id="PTHR11902">
    <property type="entry name" value="ENOLASE"/>
    <property type="match status" value="1"/>
</dbReference>
<dbReference type="PANTHER" id="PTHR11902:SF10">
    <property type="entry name" value="GAMMA-ENOLASE"/>
    <property type="match status" value="1"/>
</dbReference>
<dbReference type="Pfam" id="PF00113">
    <property type="entry name" value="Enolase_C"/>
    <property type="match status" value="1"/>
</dbReference>
<dbReference type="Pfam" id="PF03952">
    <property type="entry name" value="Enolase_N"/>
    <property type="match status" value="1"/>
</dbReference>
<dbReference type="PIRSF" id="PIRSF001400">
    <property type="entry name" value="Enolase"/>
    <property type="match status" value="1"/>
</dbReference>
<dbReference type="PRINTS" id="PR00148">
    <property type="entry name" value="ENOLASE"/>
</dbReference>
<dbReference type="SFLD" id="SFLDF00002">
    <property type="entry name" value="enolase"/>
    <property type="match status" value="1"/>
</dbReference>
<dbReference type="SFLD" id="SFLDG00178">
    <property type="entry name" value="enolase"/>
    <property type="match status" value="1"/>
</dbReference>
<dbReference type="SMART" id="SM01192">
    <property type="entry name" value="Enolase_C"/>
    <property type="match status" value="1"/>
</dbReference>
<dbReference type="SMART" id="SM01193">
    <property type="entry name" value="Enolase_N"/>
    <property type="match status" value="1"/>
</dbReference>
<dbReference type="SUPFAM" id="SSF51604">
    <property type="entry name" value="Enolase C-terminal domain-like"/>
    <property type="match status" value="1"/>
</dbReference>
<dbReference type="SUPFAM" id="SSF54826">
    <property type="entry name" value="Enolase N-terminal domain-like"/>
    <property type="match status" value="1"/>
</dbReference>
<dbReference type="PROSITE" id="PS00164">
    <property type="entry name" value="ENOLASE"/>
    <property type="match status" value="1"/>
</dbReference>
<organism>
    <name type="scientific">Gallus gallus</name>
    <name type="common">Chicken</name>
    <dbReference type="NCBI Taxonomy" id="9031"/>
    <lineage>
        <taxon>Eukaryota</taxon>
        <taxon>Metazoa</taxon>
        <taxon>Chordata</taxon>
        <taxon>Craniata</taxon>
        <taxon>Vertebrata</taxon>
        <taxon>Euteleostomi</taxon>
        <taxon>Archelosauria</taxon>
        <taxon>Archosauria</taxon>
        <taxon>Dinosauria</taxon>
        <taxon>Saurischia</taxon>
        <taxon>Theropoda</taxon>
        <taxon>Coelurosauria</taxon>
        <taxon>Aves</taxon>
        <taxon>Neognathae</taxon>
        <taxon>Galloanserae</taxon>
        <taxon>Galliformes</taxon>
        <taxon>Phasianidae</taxon>
        <taxon>Phasianinae</taxon>
        <taxon>Gallus</taxon>
    </lineage>
</organism>
<protein>
    <recommendedName>
        <fullName>Gamma-enolase</fullName>
        <ecNumber>4.2.1.11</ecNumber>
    </recommendedName>
    <alternativeName>
        <fullName>2-phospho-D-glycerate hydro-lyase</fullName>
    </alternativeName>
    <alternativeName>
        <fullName>Neural enolase</fullName>
        <shortName>NSE</shortName>
    </alternativeName>
</protein>
<feature type="chain" id="PRO_0000134115" description="Gamma-enolase">
    <location>
        <begin position="1"/>
        <end position="434"/>
    </location>
</feature>
<feature type="active site" description="Proton donor" evidence="1">
    <location>
        <position position="210"/>
    </location>
</feature>
<feature type="active site" description="Proton acceptor" evidence="1">
    <location>
        <position position="343"/>
    </location>
</feature>
<feature type="binding site" evidence="1">
    <location>
        <position position="158"/>
    </location>
    <ligand>
        <name>substrate</name>
    </ligand>
</feature>
<feature type="binding site" evidence="1">
    <location>
        <position position="167"/>
    </location>
    <ligand>
        <name>substrate</name>
    </ligand>
</feature>
<feature type="binding site" evidence="1">
    <location>
        <position position="245"/>
    </location>
    <ligand>
        <name>Mg(2+)</name>
        <dbReference type="ChEBI" id="CHEBI:18420"/>
    </ligand>
</feature>
<feature type="binding site" evidence="1">
    <location>
        <position position="293"/>
    </location>
    <ligand>
        <name>Mg(2+)</name>
        <dbReference type="ChEBI" id="CHEBI:18420"/>
    </ligand>
</feature>
<feature type="binding site" evidence="1">
    <location>
        <position position="293"/>
    </location>
    <ligand>
        <name>substrate</name>
    </ligand>
</feature>
<feature type="binding site" evidence="1">
    <location>
        <position position="318"/>
    </location>
    <ligand>
        <name>Mg(2+)</name>
        <dbReference type="ChEBI" id="CHEBI:18420"/>
    </ligand>
</feature>
<feature type="binding site" evidence="1">
    <location>
        <position position="318"/>
    </location>
    <ligand>
        <name>substrate</name>
    </ligand>
</feature>
<feature type="binding site" evidence="1">
    <location>
        <begin position="370"/>
        <end position="373"/>
    </location>
    <ligand>
        <name>substrate</name>
    </ligand>
</feature>
<feature type="binding site" evidence="1">
    <location>
        <position position="394"/>
    </location>
    <ligand>
        <name>substrate</name>
    </ligand>
</feature>
<sequence length="434" mass="47308">MAVERIHAREILDSRGNPTVEVDLYTHKGMFRAAVPSGASTGIYEALELRDNDKSRFLGKGVLQAVDHINSTVAPAIVGSGLSVVDQEKIDNLMLEMDGTENKSKFGANAILGVSLAVCKAGAAEKDVPLYRHIADLAGNSDLILPVPAFNVINGGSHAGNKLAMQEFMILPVGAESFRDAMRIGAEVYHNLKSVIKEKYGKDATNVGDEGGFAPNILENSEALELLKEAIDKAGYTDKIVIGMDVAASEFYRDGKYDLDFKSPDDPSRYISADELGDLYQSFVRAYPVLSIEDPFDQDDWEAWSKFTANVGIQIVGDDLTVTNPKRIERAVEEKACNCLLLKVNQIGSVTEAIQACKLAQENGWGVMVSHRSGETEDTFIADLVVALCTGQIKTGAPCRSERLAKYNQLMRIEEELGDEARFAGHNFRNPSVL</sequence>
<gene>
    <name type="primary">ENO2</name>
</gene>
<reference key="1">
    <citation type="journal article" date="1998" name="Biochim. Biophys. Acta">
        <title>cDNA cloning and characterization of neuron-specific enolase from chicken.</title>
        <authorList>
            <person name="Tanaka M."/>
            <person name="Taniguchi T."/>
            <person name="Ohkubo T."/>
            <person name="Nakashima K."/>
        </authorList>
    </citation>
    <scope>NUCLEOTIDE SEQUENCE [MRNA]</scope>
    <source>
        <tissue>Brain</tissue>
    </source>
</reference>
<accession>O57391</accession>
<keyword id="KW-0963">Cytoplasm</keyword>
<keyword id="KW-0324">Glycolysis</keyword>
<keyword id="KW-0456">Lyase</keyword>
<keyword id="KW-0460">Magnesium</keyword>
<keyword id="KW-0479">Metal-binding</keyword>
<keyword id="KW-1185">Reference proteome</keyword>
<comment type="catalytic activity">
    <reaction>
        <text>(2R)-2-phosphoglycerate = phosphoenolpyruvate + H2O</text>
        <dbReference type="Rhea" id="RHEA:10164"/>
        <dbReference type="ChEBI" id="CHEBI:15377"/>
        <dbReference type="ChEBI" id="CHEBI:58289"/>
        <dbReference type="ChEBI" id="CHEBI:58702"/>
        <dbReference type="EC" id="4.2.1.11"/>
    </reaction>
</comment>
<comment type="cofactor">
    <cofactor evidence="1">
        <name>Mg(2+)</name>
        <dbReference type="ChEBI" id="CHEBI:18420"/>
    </cofactor>
    <text evidence="1">Mg(2+) is required for catalysis and for stabilizing the dimer.</text>
</comment>
<comment type="pathway">
    <text>Carbohydrate degradation; glycolysis; pyruvate from D-glyceraldehyde 3-phosphate: step 4/5.</text>
</comment>
<comment type="subunit">
    <text evidence="1">Homodimer.</text>
</comment>
<comment type="subcellular location">
    <subcellularLocation>
        <location>Cytoplasm</location>
    </subcellularLocation>
</comment>
<comment type="tissue specificity">
    <text>Expressed in the brain and, to much less but significant extents, in the pituitary and adrenal glands.</text>
</comment>
<comment type="similarity">
    <text evidence="2">Belongs to the enolase family.</text>
</comment>
<name>ENOG_CHICK</name>